<proteinExistence type="inferred from homology"/>
<sequence length="153" mass="18010">MADTLMSDTPFWQRKTLDEMTDAEWESLCDGCGQCCLHKLMDEDTDEIYFTNVACRQLNIKTCQCRHYERRFEFEPDCIKLTRENLPDFEWLPMTCAYRLLAEGKPLPTWHPLLTGSKAAMHGERISVRHIAVKESEVRDWQDHILNKPSWAE</sequence>
<name>YCGN_SALHS</name>
<accession>B4TKE2</accession>
<dbReference type="EMBL" id="CP001120">
    <property type="protein sequence ID" value="ACF70221.1"/>
    <property type="molecule type" value="Genomic_DNA"/>
</dbReference>
<dbReference type="SMR" id="B4TKE2"/>
<dbReference type="KEGG" id="seh:SeHA_C2010"/>
<dbReference type="HOGENOM" id="CLU_109769_0_1_6"/>
<dbReference type="Proteomes" id="UP000001866">
    <property type="component" value="Chromosome"/>
</dbReference>
<dbReference type="HAMAP" id="MF_00676">
    <property type="entry name" value="UPF0260"/>
    <property type="match status" value="1"/>
</dbReference>
<dbReference type="InterPro" id="IPR005358">
    <property type="entry name" value="Puta_zinc/iron-chelating_dom"/>
</dbReference>
<dbReference type="InterPro" id="IPR008228">
    <property type="entry name" value="UCP006173"/>
</dbReference>
<dbReference type="NCBIfam" id="NF003498">
    <property type="entry name" value="PRK05170.1-1"/>
    <property type="match status" value="1"/>
</dbReference>
<dbReference type="NCBIfam" id="NF003501">
    <property type="entry name" value="PRK05170.1-5"/>
    <property type="match status" value="1"/>
</dbReference>
<dbReference type="NCBIfam" id="NF003503">
    <property type="entry name" value="PRK05170.2-1"/>
    <property type="match status" value="1"/>
</dbReference>
<dbReference type="NCBIfam" id="NF003507">
    <property type="entry name" value="PRK05170.2-5"/>
    <property type="match status" value="1"/>
</dbReference>
<dbReference type="PANTHER" id="PTHR37421">
    <property type="entry name" value="UPF0260 PROTEIN YCGN"/>
    <property type="match status" value="1"/>
</dbReference>
<dbReference type="PANTHER" id="PTHR37421:SF1">
    <property type="entry name" value="UPF0260 PROTEIN YCGN"/>
    <property type="match status" value="1"/>
</dbReference>
<dbReference type="Pfam" id="PF03692">
    <property type="entry name" value="CxxCxxCC"/>
    <property type="match status" value="1"/>
</dbReference>
<dbReference type="PIRSF" id="PIRSF006173">
    <property type="entry name" value="UCP006173"/>
    <property type="match status" value="1"/>
</dbReference>
<feature type="chain" id="PRO_1000131634" description="UPF0260 protein YcgN">
    <location>
        <begin position="1"/>
        <end position="153"/>
    </location>
</feature>
<comment type="similarity">
    <text evidence="1">Belongs to the UPF0260 family.</text>
</comment>
<evidence type="ECO:0000255" key="1">
    <source>
        <dbReference type="HAMAP-Rule" id="MF_00676"/>
    </source>
</evidence>
<protein>
    <recommendedName>
        <fullName evidence="1">UPF0260 protein YcgN</fullName>
    </recommendedName>
</protein>
<gene>
    <name evidence="1" type="primary">ycgN</name>
    <name type="ordered locus">SeHA_C2010</name>
</gene>
<organism>
    <name type="scientific">Salmonella heidelberg (strain SL476)</name>
    <dbReference type="NCBI Taxonomy" id="454169"/>
    <lineage>
        <taxon>Bacteria</taxon>
        <taxon>Pseudomonadati</taxon>
        <taxon>Pseudomonadota</taxon>
        <taxon>Gammaproteobacteria</taxon>
        <taxon>Enterobacterales</taxon>
        <taxon>Enterobacteriaceae</taxon>
        <taxon>Salmonella</taxon>
    </lineage>
</organism>
<reference key="1">
    <citation type="journal article" date="2011" name="J. Bacteriol.">
        <title>Comparative genomics of 28 Salmonella enterica isolates: evidence for CRISPR-mediated adaptive sublineage evolution.</title>
        <authorList>
            <person name="Fricke W.F."/>
            <person name="Mammel M.K."/>
            <person name="McDermott P.F."/>
            <person name="Tartera C."/>
            <person name="White D.G."/>
            <person name="Leclerc J.E."/>
            <person name="Ravel J."/>
            <person name="Cebula T.A."/>
        </authorList>
    </citation>
    <scope>NUCLEOTIDE SEQUENCE [LARGE SCALE GENOMIC DNA]</scope>
    <source>
        <strain>SL476</strain>
    </source>
</reference>